<keyword id="KW-0963">Cytoplasm</keyword>
<keyword id="KW-0903">Direct protein sequencing</keyword>
<keyword id="KW-0329">Glyoxylate bypass</keyword>
<keyword id="KW-0460">Magnesium</keyword>
<keyword id="KW-0464">Manganese</keyword>
<keyword id="KW-0479">Metal-binding</keyword>
<keyword id="KW-0521">NADP</keyword>
<keyword id="KW-0560">Oxidoreductase</keyword>
<keyword id="KW-1185">Reference proteome</keyword>
<keyword id="KW-0816">Tricarboxylic acid cycle</keyword>
<proteinExistence type="evidence at protein level"/>
<name>IDHC_YEAST</name>
<gene>
    <name type="primary">IDP2</name>
    <name type="ordered locus">YLR174W</name>
    <name type="ORF">L9470.12</name>
</gene>
<reference key="1">
    <citation type="journal article" date="1994" name="Biochemistry">
        <title>Isolation, characterization, and disruption of the yeast gene encoding cytosolic NADP-specific isocitrate dehydrogenase.</title>
        <authorList>
            <person name="Loftus T.M."/>
            <person name="Hall L.V."/>
            <person name="Anderson S.L."/>
            <person name="McAlister-Henn L."/>
        </authorList>
    </citation>
    <scope>NUCLEOTIDE SEQUENCE [GENOMIC DNA]</scope>
    <scope>PARTIAL PROTEIN SEQUENCE</scope>
    <scope>CHARACTERIZATION</scope>
</reference>
<reference key="2">
    <citation type="journal article" date="1997" name="Nature">
        <title>The nucleotide sequence of Saccharomyces cerevisiae chromosome XII.</title>
        <authorList>
            <person name="Johnston M."/>
            <person name="Hillier L.W."/>
            <person name="Riles L."/>
            <person name="Albermann K."/>
            <person name="Andre B."/>
            <person name="Ansorge W."/>
            <person name="Benes V."/>
            <person name="Brueckner M."/>
            <person name="Delius H."/>
            <person name="Dubois E."/>
            <person name="Duesterhoeft A."/>
            <person name="Entian K.-D."/>
            <person name="Floeth M."/>
            <person name="Goffeau A."/>
            <person name="Hebling U."/>
            <person name="Heumann K."/>
            <person name="Heuss-Neitzel D."/>
            <person name="Hilbert H."/>
            <person name="Hilger F."/>
            <person name="Kleine K."/>
            <person name="Koetter P."/>
            <person name="Louis E.J."/>
            <person name="Messenguy F."/>
            <person name="Mewes H.-W."/>
            <person name="Miosga T."/>
            <person name="Moestl D."/>
            <person name="Mueller-Auer S."/>
            <person name="Nentwich U."/>
            <person name="Obermaier B."/>
            <person name="Piravandi E."/>
            <person name="Pohl T.M."/>
            <person name="Portetelle D."/>
            <person name="Purnelle B."/>
            <person name="Rechmann S."/>
            <person name="Rieger M."/>
            <person name="Rinke M."/>
            <person name="Rose M."/>
            <person name="Scharfe M."/>
            <person name="Scherens B."/>
            <person name="Scholler P."/>
            <person name="Schwager C."/>
            <person name="Schwarz S."/>
            <person name="Underwood A.P."/>
            <person name="Urrestarazu L.A."/>
            <person name="Vandenbol M."/>
            <person name="Verhasselt P."/>
            <person name="Vierendeels F."/>
            <person name="Voet M."/>
            <person name="Volckaert G."/>
            <person name="Voss H."/>
            <person name="Wambutt R."/>
            <person name="Wedler E."/>
            <person name="Wedler H."/>
            <person name="Zimmermann F.K."/>
            <person name="Zollner A."/>
            <person name="Hani J."/>
            <person name="Hoheisel J.D."/>
        </authorList>
    </citation>
    <scope>NUCLEOTIDE SEQUENCE [LARGE SCALE GENOMIC DNA]</scope>
    <source>
        <strain>ATCC 204508 / S288c</strain>
    </source>
</reference>
<reference key="3">
    <citation type="journal article" date="2014" name="G3 (Bethesda)">
        <title>The reference genome sequence of Saccharomyces cerevisiae: Then and now.</title>
        <authorList>
            <person name="Engel S.R."/>
            <person name="Dietrich F.S."/>
            <person name="Fisk D.G."/>
            <person name="Binkley G."/>
            <person name="Balakrishnan R."/>
            <person name="Costanzo M.C."/>
            <person name="Dwight S.S."/>
            <person name="Hitz B.C."/>
            <person name="Karra K."/>
            <person name="Nash R.S."/>
            <person name="Weng S."/>
            <person name="Wong E.D."/>
            <person name="Lloyd P."/>
            <person name="Skrzypek M.S."/>
            <person name="Miyasato S.R."/>
            <person name="Simison M."/>
            <person name="Cherry J.M."/>
        </authorList>
    </citation>
    <scope>GENOME REANNOTATION</scope>
    <source>
        <strain>ATCC 204508 / S288c</strain>
    </source>
</reference>
<reference key="4">
    <citation type="journal article" date="2003" name="Nature">
        <title>Global analysis of protein expression in yeast.</title>
        <authorList>
            <person name="Ghaemmaghami S."/>
            <person name="Huh W.-K."/>
            <person name="Bower K."/>
            <person name="Howson R.W."/>
            <person name="Belle A."/>
            <person name="Dephoure N."/>
            <person name="O'Shea E.K."/>
            <person name="Weissman J.S."/>
        </authorList>
    </citation>
    <scope>LEVEL OF PROTEIN EXPRESSION [LARGE SCALE ANALYSIS]</scope>
</reference>
<reference key="5">
    <citation type="journal article" date="2012" name="Proc. Natl. Acad. Sci. U.S.A.">
        <title>N-terminal acetylome analyses and functional insights of the N-terminal acetyltransferase NatB.</title>
        <authorList>
            <person name="Van Damme P."/>
            <person name="Lasa M."/>
            <person name="Polevoda B."/>
            <person name="Gazquez C."/>
            <person name="Elosegui-Artola A."/>
            <person name="Kim D.S."/>
            <person name="De Juan-Pardo E."/>
            <person name="Demeyer K."/>
            <person name="Hole K."/>
            <person name="Larrea E."/>
            <person name="Timmerman E."/>
            <person name="Prieto J."/>
            <person name="Arnesen T."/>
            <person name="Sherman F."/>
            <person name="Gevaert K."/>
            <person name="Aldabe R."/>
        </authorList>
    </citation>
    <scope>IDENTIFICATION BY MASS SPECTROMETRY [LARGE SCALE ANALYSIS]</scope>
</reference>
<organism>
    <name type="scientific">Saccharomyces cerevisiae (strain ATCC 204508 / S288c)</name>
    <name type="common">Baker's yeast</name>
    <dbReference type="NCBI Taxonomy" id="559292"/>
    <lineage>
        <taxon>Eukaryota</taxon>
        <taxon>Fungi</taxon>
        <taxon>Dikarya</taxon>
        <taxon>Ascomycota</taxon>
        <taxon>Saccharomycotina</taxon>
        <taxon>Saccharomycetes</taxon>
        <taxon>Saccharomycetales</taxon>
        <taxon>Saccharomycetaceae</taxon>
        <taxon>Saccharomyces</taxon>
    </lineage>
</organism>
<protein>
    <recommendedName>
        <fullName>Isocitrate dehydrogenase [NADP] cytoplasmic</fullName>
        <shortName>IDH</shortName>
        <ecNumber>1.1.1.42</ecNumber>
    </recommendedName>
    <alternativeName>
        <fullName>IDP</fullName>
    </alternativeName>
    <alternativeName>
        <fullName>NADP(+)-specific ICDH</fullName>
    </alternativeName>
    <alternativeName>
        <fullName>Oxalosuccinate decarboxylase</fullName>
    </alternativeName>
</protein>
<feature type="chain" id="PRO_0000083587" description="Isocitrate dehydrogenase [NADP] cytoplasmic">
    <location>
        <begin position="1"/>
        <end position="412"/>
    </location>
</feature>
<feature type="binding site" evidence="1">
    <location>
        <begin position="75"/>
        <end position="77"/>
    </location>
    <ligand>
        <name>NADP(+)</name>
        <dbReference type="ChEBI" id="CHEBI:58349"/>
    </ligand>
</feature>
<feature type="binding site" evidence="1">
    <location>
        <position position="77"/>
    </location>
    <ligand>
        <name>substrate</name>
    </ligand>
</feature>
<feature type="binding site" evidence="1">
    <location>
        <position position="82"/>
    </location>
    <ligand>
        <name>NADP(+)</name>
        <dbReference type="ChEBI" id="CHEBI:58349"/>
    </ligand>
</feature>
<feature type="binding site" evidence="1">
    <location>
        <begin position="94"/>
        <end position="100"/>
    </location>
    <ligand>
        <name>substrate</name>
    </ligand>
</feature>
<feature type="binding site" evidence="1">
    <location>
        <position position="109"/>
    </location>
    <ligand>
        <name>substrate</name>
    </ligand>
</feature>
<feature type="binding site" evidence="1">
    <location>
        <position position="132"/>
    </location>
    <ligand>
        <name>substrate</name>
    </ligand>
</feature>
<feature type="binding site" evidence="1">
    <location>
        <position position="252"/>
    </location>
    <ligand>
        <name>Mn(2+)</name>
        <dbReference type="ChEBI" id="CHEBI:29035"/>
    </ligand>
</feature>
<feature type="binding site" evidence="1">
    <location>
        <position position="260"/>
    </location>
    <ligand>
        <name>NADP(+)</name>
        <dbReference type="ChEBI" id="CHEBI:58349"/>
    </ligand>
</feature>
<feature type="binding site" evidence="1">
    <location>
        <position position="275"/>
    </location>
    <ligand>
        <name>Mn(2+)</name>
        <dbReference type="ChEBI" id="CHEBI:29035"/>
    </ligand>
</feature>
<feature type="binding site" evidence="1">
    <location>
        <begin position="310"/>
        <end position="315"/>
    </location>
    <ligand>
        <name>NADP(+)</name>
        <dbReference type="ChEBI" id="CHEBI:58349"/>
    </ligand>
</feature>
<feature type="binding site" evidence="1">
    <location>
        <position position="328"/>
    </location>
    <ligand>
        <name>NADP(+)</name>
        <dbReference type="ChEBI" id="CHEBI:58349"/>
    </ligand>
</feature>
<feature type="site" description="Critical for catalysis" evidence="1">
    <location>
        <position position="139"/>
    </location>
</feature>
<feature type="site" description="Critical for catalysis" evidence="1">
    <location>
        <position position="212"/>
    </location>
</feature>
<feature type="sequence conflict" description="In Ref. 1; AAA64516." evidence="3" ref="1">
    <original>HLIR</original>
    <variation>SFNQ</variation>
    <location>
        <begin position="24"/>
        <end position="27"/>
    </location>
</feature>
<feature type="sequence conflict" description="In Ref. 1; AAA64516." evidence="3" ref="1">
    <original>G</original>
    <variation>R</variation>
    <location>
        <position position="68"/>
    </location>
</feature>
<feature type="sequence conflict" description="In Ref. 1; AAA64516." evidence="3" ref="1">
    <original>T</original>
    <variation>N</variation>
    <location>
        <position position="185"/>
    </location>
</feature>
<feature type="sequence conflict" description="In Ref. 1; AAA64516." evidence="3" ref="1">
    <original>ARSYKEKF</original>
    <variation>LEVIKRSL</variation>
    <location>
        <begin position="232"/>
        <end position="239"/>
    </location>
</feature>
<feature type="sequence conflict" description="In Ref. 1; AAA64516." evidence="3" ref="1">
    <original>I</original>
    <variation>M</variation>
    <location>
        <position position="267"/>
    </location>
</feature>
<feature type="sequence conflict" description="In Ref. 1; AAA64516." evidence="3" ref="1">
    <original>EA</original>
    <variation>DR</variation>
    <location>
        <begin position="306"/>
        <end position="307"/>
    </location>
</feature>
<feature type="sequence conflict" description="In Ref. 1; AAA64516." evidence="3" ref="1">
    <original>FRQHQQGK</original>
    <variation>LTDYDKGR</variation>
    <location>
        <begin position="316"/>
        <end position="323"/>
    </location>
</feature>
<dbReference type="EC" id="1.1.1.42"/>
<dbReference type="EMBL" id="L26312">
    <property type="protein sequence ID" value="AAA64516.1"/>
    <property type="molecule type" value="Genomic_DNA"/>
</dbReference>
<dbReference type="EMBL" id="U17246">
    <property type="protein sequence ID" value="AAB67464.1"/>
    <property type="molecule type" value="Genomic_DNA"/>
</dbReference>
<dbReference type="EMBL" id="BK006945">
    <property type="protein sequence ID" value="DAA09494.1"/>
    <property type="molecule type" value="Genomic_DNA"/>
</dbReference>
<dbReference type="PIR" id="S51419">
    <property type="entry name" value="S51419"/>
</dbReference>
<dbReference type="RefSeq" id="NP_013275.1">
    <property type="nucleotide sequence ID" value="NM_001182061.1"/>
</dbReference>
<dbReference type="SMR" id="P41939"/>
<dbReference type="BioGRID" id="31445">
    <property type="interactions" value="97"/>
</dbReference>
<dbReference type="DIP" id="DIP-4252N"/>
<dbReference type="FunCoup" id="P41939">
    <property type="interactions" value="1014"/>
</dbReference>
<dbReference type="IntAct" id="P41939">
    <property type="interactions" value="2"/>
</dbReference>
<dbReference type="STRING" id="4932.YLR174W"/>
<dbReference type="iPTMnet" id="P41939"/>
<dbReference type="PaxDb" id="4932-YLR174W"/>
<dbReference type="PeptideAtlas" id="P41939"/>
<dbReference type="EnsemblFungi" id="YLR174W_mRNA">
    <property type="protein sequence ID" value="YLR174W"/>
    <property type="gene ID" value="YLR174W"/>
</dbReference>
<dbReference type="GeneID" id="850871"/>
<dbReference type="KEGG" id="sce:YLR174W"/>
<dbReference type="AGR" id="SGD:S000004164"/>
<dbReference type="SGD" id="S000004164">
    <property type="gene designation" value="IDP2"/>
</dbReference>
<dbReference type="VEuPathDB" id="FungiDB:YLR174W"/>
<dbReference type="eggNOG" id="KOG1526">
    <property type="taxonomic scope" value="Eukaryota"/>
</dbReference>
<dbReference type="GeneTree" id="ENSGT00390000012547"/>
<dbReference type="HOGENOM" id="CLU_023296_1_1_1"/>
<dbReference type="InParanoid" id="P41939"/>
<dbReference type="OMA" id="EYPVYNF"/>
<dbReference type="OrthoDB" id="248923at2759"/>
<dbReference type="BioCyc" id="MetaCyc:YLR174W-MONOMER"/>
<dbReference type="BioCyc" id="YEAST:YLR174W-MONOMER"/>
<dbReference type="BRENDA" id="1.1.1.42">
    <property type="organism ID" value="984"/>
</dbReference>
<dbReference type="SABIO-RK" id="P41939"/>
<dbReference type="BioGRID-ORCS" id="850871">
    <property type="hits" value="0 hits in 10 CRISPR screens"/>
</dbReference>
<dbReference type="PRO" id="PR:P41939"/>
<dbReference type="Proteomes" id="UP000002311">
    <property type="component" value="Chromosome XII"/>
</dbReference>
<dbReference type="RNAct" id="P41939">
    <property type="molecule type" value="protein"/>
</dbReference>
<dbReference type="GO" id="GO:0005829">
    <property type="term" value="C:cytosol"/>
    <property type="evidence" value="ECO:0000314"/>
    <property type="project" value="SGD"/>
</dbReference>
<dbReference type="GO" id="GO:0005739">
    <property type="term" value="C:mitochondrion"/>
    <property type="evidence" value="ECO:0000318"/>
    <property type="project" value="GO_Central"/>
</dbReference>
<dbReference type="GO" id="GO:0004450">
    <property type="term" value="F:isocitrate dehydrogenase (NADP+) activity"/>
    <property type="evidence" value="ECO:0000314"/>
    <property type="project" value="SGD"/>
</dbReference>
<dbReference type="GO" id="GO:0000287">
    <property type="term" value="F:magnesium ion binding"/>
    <property type="evidence" value="ECO:0007669"/>
    <property type="project" value="InterPro"/>
</dbReference>
<dbReference type="GO" id="GO:0051287">
    <property type="term" value="F:NAD binding"/>
    <property type="evidence" value="ECO:0007669"/>
    <property type="project" value="InterPro"/>
</dbReference>
<dbReference type="GO" id="GO:0006097">
    <property type="term" value="P:glyoxylate cycle"/>
    <property type="evidence" value="ECO:0007669"/>
    <property type="project" value="UniProtKB-KW"/>
</dbReference>
<dbReference type="GO" id="GO:0006102">
    <property type="term" value="P:isocitrate metabolic process"/>
    <property type="evidence" value="ECO:0000315"/>
    <property type="project" value="SGD"/>
</dbReference>
<dbReference type="GO" id="GO:0006739">
    <property type="term" value="P:NADP metabolic process"/>
    <property type="evidence" value="ECO:0000318"/>
    <property type="project" value="GO_Central"/>
</dbReference>
<dbReference type="GO" id="GO:0006099">
    <property type="term" value="P:tricarboxylic acid cycle"/>
    <property type="evidence" value="ECO:0007669"/>
    <property type="project" value="UniProtKB-KW"/>
</dbReference>
<dbReference type="FunFam" id="3.40.718.10:FF:000002">
    <property type="entry name" value="Isocitrate dehydrogenase [NADP]"/>
    <property type="match status" value="1"/>
</dbReference>
<dbReference type="Gene3D" id="3.40.718.10">
    <property type="entry name" value="Isopropylmalate Dehydrogenase"/>
    <property type="match status" value="1"/>
</dbReference>
<dbReference type="InterPro" id="IPR019818">
    <property type="entry name" value="IsoCit/isopropylmalate_DH_CS"/>
</dbReference>
<dbReference type="InterPro" id="IPR004790">
    <property type="entry name" value="Isocitrate_DH_NADP"/>
</dbReference>
<dbReference type="InterPro" id="IPR024084">
    <property type="entry name" value="IsoPropMal-DH-like_dom"/>
</dbReference>
<dbReference type="NCBIfam" id="TIGR00127">
    <property type="entry name" value="nadp_idh_euk"/>
    <property type="match status" value="1"/>
</dbReference>
<dbReference type="NCBIfam" id="NF006156">
    <property type="entry name" value="PRK08299.1"/>
    <property type="match status" value="1"/>
</dbReference>
<dbReference type="PANTHER" id="PTHR11822:SF41">
    <property type="entry name" value="ISOCITRATE DEHYDROGENASE [NADP]-RELATED"/>
    <property type="match status" value="1"/>
</dbReference>
<dbReference type="PANTHER" id="PTHR11822">
    <property type="entry name" value="NADP-SPECIFIC ISOCITRATE DEHYDROGENASE"/>
    <property type="match status" value="1"/>
</dbReference>
<dbReference type="Pfam" id="PF00180">
    <property type="entry name" value="Iso_dh"/>
    <property type="match status" value="1"/>
</dbReference>
<dbReference type="PIRSF" id="PIRSF000108">
    <property type="entry name" value="IDH_NADP"/>
    <property type="match status" value="1"/>
</dbReference>
<dbReference type="SMART" id="SM01329">
    <property type="entry name" value="Iso_dh"/>
    <property type="match status" value="1"/>
</dbReference>
<dbReference type="SUPFAM" id="SSF53659">
    <property type="entry name" value="Isocitrate/Isopropylmalate dehydrogenase-like"/>
    <property type="match status" value="1"/>
</dbReference>
<dbReference type="PROSITE" id="PS00470">
    <property type="entry name" value="IDH_IMDH"/>
    <property type="match status" value="1"/>
</dbReference>
<evidence type="ECO:0000250" key="1"/>
<evidence type="ECO:0000269" key="2">
    <source>
    </source>
</evidence>
<evidence type="ECO:0000305" key="3"/>
<sequence length="412" mass="46562">MTKIKVANPIVEMDGDEQTRIIWHLIRDKLVLPYLDVDLKYYDLSVEYRDQTNDQVTVDSATATLKYGVAVKCATITPDEARVEEFHLKKMWKSPNGTIRNILGGTVFREPIIIPRIPRLVPQWEKPIIIGRHAFGDQYKATDVIVPEEGELRLVYKSKSGTHDVDLKVFDYPEHGGVAMMMYNTTDSIEGFAKASFELAIERKLPLYSTTKNTILKKYDGKFKDVFEAMYARSYKEKFESLGIWYEHRLIDDMVAQMLKSKGGYIIAMKNYDGDVESDIVAQGFGSLGLMTSVLITPDGKTFESEAAHGTVTRHFRQHQQGKETSTNSIASIFAWTRGIIQRGKLDNTPDVVKFGQILESATVNTVQEDGIMTKDLALILGKSERSAYVTTEEFIDAVESRLKKEFEAAAL</sequence>
<comment type="function">
    <text>May function in the production of NADPH for fatty acid and sterol synthesis.</text>
</comment>
<comment type="catalytic activity">
    <reaction>
        <text>D-threo-isocitrate + NADP(+) = 2-oxoglutarate + CO2 + NADPH</text>
        <dbReference type="Rhea" id="RHEA:19629"/>
        <dbReference type="ChEBI" id="CHEBI:15562"/>
        <dbReference type="ChEBI" id="CHEBI:16526"/>
        <dbReference type="ChEBI" id="CHEBI:16810"/>
        <dbReference type="ChEBI" id="CHEBI:57783"/>
        <dbReference type="ChEBI" id="CHEBI:58349"/>
        <dbReference type="EC" id="1.1.1.42"/>
    </reaction>
</comment>
<comment type="cofactor">
    <cofactor evidence="1">
        <name>Mg(2+)</name>
        <dbReference type="ChEBI" id="CHEBI:18420"/>
    </cofactor>
    <cofactor evidence="1">
        <name>Mn(2+)</name>
        <dbReference type="ChEBI" id="CHEBI:29035"/>
    </cofactor>
    <text evidence="1">Binds 1 Mg(2+) or Mn(2+) ion per subunit.</text>
</comment>
<comment type="activity regulation">
    <text>By catabolite repression.</text>
</comment>
<comment type="subunit">
    <text>Homodimer.</text>
</comment>
<comment type="subcellular location">
    <subcellularLocation>
        <location>Cytoplasm</location>
    </subcellularLocation>
</comment>
<comment type="PTM">
    <text>The N-terminus is blocked.</text>
</comment>
<comment type="miscellaneous">
    <text evidence="2">Present with 2620 molecules/cell in log phase SD medium.</text>
</comment>
<comment type="similarity">
    <text evidence="3">Belongs to the isocitrate and isopropylmalate dehydrogenases family.</text>
</comment>
<accession>P41939</accession>
<accession>D6VYH8</accession>